<proteinExistence type="inferred from homology"/>
<gene>
    <name type="ORF">SPBC2A9.02</name>
</gene>
<name>YGI2_SCHPO</name>
<sequence>MRIFVTGAAGFIGSEIVRQLLEAGHEVVGLVRSEENAAKLRAAGGTPYIGTLEDLDTLKKGVAQCDGVIHTAFVHDFSIYQEACKLDARVIEAIGEVLRGTERPLITTSVTAVLSSNGKLGTEISEVPQPPIPRQLGEVTTLKFASQGVRASILRLPPTVHGAGDHAFVPMLINVAKNKGVSAYIGNGMNCWPAVHRTDAANLFVLALEKETAGSIYHAVAEEGIPIKEIAGMIGKRLDIPVISVSSEEATEHFGFLSSFLSVDNPTSSILTQQRLGWKPTHSTLMTDLASDAYF</sequence>
<comment type="similarity">
    <text evidence="1">Belongs to the NAD(P)-dependent epimerase/dehydratase family.</text>
</comment>
<evidence type="ECO:0000305" key="1"/>
<organism>
    <name type="scientific">Schizosaccharomyces pombe (strain 972 / ATCC 24843)</name>
    <name type="common">Fission yeast</name>
    <dbReference type="NCBI Taxonomy" id="284812"/>
    <lineage>
        <taxon>Eukaryota</taxon>
        <taxon>Fungi</taxon>
        <taxon>Dikarya</taxon>
        <taxon>Ascomycota</taxon>
        <taxon>Taphrinomycotina</taxon>
        <taxon>Schizosaccharomycetes</taxon>
        <taxon>Schizosaccharomycetales</taxon>
        <taxon>Schizosaccharomycetaceae</taxon>
        <taxon>Schizosaccharomyces</taxon>
    </lineage>
</organism>
<reference key="1">
    <citation type="journal article" date="2002" name="Nature">
        <title>The genome sequence of Schizosaccharomyces pombe.</title>
        <authorList>
            <person name="Wood V."/>
            <person name="Gwilliam R."/>
            <person name="Rajandream M.A."/>
            <person name="Lyne M.H."/>
            <person name="Lyne R."/>
            <person name="Stewart A."/>
            <person name="Sgouros J.G."/>
            <person name="Peat N."/>
            <person name="Hayles J."/>
            <person name="Baker S.G."/>
            <person name="Basham D."/>
            <person name="Bowman S."/>
            <person name="Brooks K."/>
            <person name="Brown D."/>
            <person name="Brown S."/>
            <person name="Chillingworth T."/>
            <person name="Churcher C.M."/>
            <person name="Collins M."/>
            <person name="Connor R."/>
            <person name="Cronin A."/>
            <person name="Davis P."/>
            <person name="Feltwell T."/>
            <person name="Fraser A."/>
            <person name="Gentles S."/>
            <person name="Goble A."/>
            <person name="Hamlin N."/>
            <person name="Harris D.E."/>
            <person name="Hidalgo J."/>
            <person name="Hodgson G."/>
            <person name="Holroyd S."/>
            <person name="Hornsby T."/>
            <person name="Howarth S."/>
            <person name="Huckle E.J."/>
            <person name="Hunt S."/>
            <person name="Jagels K."/>
            <person name="James K.D."/>
            <person name="Jones L."/>
            <person name="Jones M."/>
            <person name="Leather S."/>
            <person name="McDonald S."/>
            <person name="McLean J."/>
            <person name="Mooney P."/>
            <person name="Moule S."/>
            <person name="Mungall K.L."/>
            <person name="Murphy L.D."/>
            <person name="Niblett D."/>
            <person name="Odell C."/>
            <person name="Oliver K."/>
            <person name="O'Neil S."/>
            <person name="Pearson D."/>
            <person name="Quail M.A."/>
            <person name="Rabbinowitsch E."/>
            <person name="Rutherford K.M."/>
            <person name="Rutter S."/>
            <person name="Saunders D."/>
            <person name="Seeger K."/>
            <person name="Sharp S."/>
            <person name="Skelton J."/>
            <person name="Simmonds M.N."/>
            <person name="Squares R."/>
            <person name="Squares S."/>
            <person name="Stevens K."/>
            <person name="Taylor K."/>
            <person name="Taylor R.G."/>
            <person name="Tivey A."/>
            <person name="Walsh S.V."/>
            <person name="Warren T."/>
            <person name="Whitehead S."/>
            <person name="Woodward J.R."/>
            <person name="Volckaert G."/>
            <person name="Aert R."/>
            <person name="Robben J."/>
            <person name="Grymonprez B."/>
            <person name="Weltjens I."/>
            <person name="Vanstreels E."/>
            <person name="Rieger M."/>
            <person name="Schaefer M."/>
            <person name="Mueller-Auer S."/>
            <person name="Gabel C."/>
            <person name="Fuchs M."/>
            <person name="Duesterhoeft A."/>
            <person name="Fritzc C."/>
            <person name="Holzer E."/>
            <person name="Moestl D."/>
            <person name="Hilbert H."/>
            <person name="Borzym K."/>
            <person name="Langer I."/>
            <person name="Beck A."/>
            <person name="Lehrach H."/>
            <person name="Reinhardt R."/>
            <person name="Pohl T.M."/>
            <person name="Eger P."/>
            <person name="Zimmermann W."/>
            <person name="Wedler H."/>
            <person name="Wambutt R."/>
            <person name="Purnelle B."/>
            <person name="Goffeau A."/>
            <person name="Cadieu E."/>
            <person name="Dreano S."/>
            <person name="Gloux S."/>
            <person name="Lelaure V."/>
            <person name="Mottier S."/>
            <person name="Galibert F."/>
            <person name="Aves S.J."/>
            <person name="Xiang Z."/>
            <person name="Hunt C."/>
            <person name="Moore K."/>
            <person name="Hurst S.M."/>
            <person name="Lucas M."/>
            <person name="Rochet M."/>
            <person name="Gaillardin C."/>
            <person name="Tallada V.A."/>
            <person name="Garzon A."/>
            <person name="Thode G."/>
            <person name="Daga R.R."/>
            <person name="Cruzado L."/>
            <person name="Jimenez J."/>
            <person name="Sanchez M."/>
            <person name="del Rey F."/>
            <person name="Benito J."/>
            <person name="Dominguez A."/>
            <person name="Revuelta J.L."/>
            <person name="Moreno S."/>
            <person name="Armstrong J."/>
            <person name="Forsburg S.L."/>
            <person name="Cerutti L."/>
            <person name="Lowe T."/>
            <person name="McCombie W.R."/>
            <person name="Paulsen I."/>
            <person name="Potashkin J."/>
            <person name="Shpakovski G.V."/>
            <person name="Ussery D."/>
            <person name="Barrell B.G."/>
            <person name="Nurse P."/>
        </authorList>
    </citation>
    <scope>NUCLEOTIDE SEQUENCE [LARGE SCALE GENOMIC DNA]</scope>
    <source>
        <strain>972 / ATCC 24843</strain>
    </source>
</reference>
<dbReference type="EMBL" id="CU329671">
    <property type="protein sequence ID" value="CAB39844.1"/>
    <property type="molecule type" value="Genomic_DNA"/>
</dbReference>
<dbReference type="PIR" id="T40093">
    <property type="entry name" value="T40093"/>
</dbReference>
<dbReference type="RefSeq" id="NP_596211.1">
    <property type="nucleotide sequence ID" value="NM_001022130.2"/>
</dbReference>
<dbReference type="SMR" id="Q9Y7K4"/>
<dbReference type="BioGRID" id="276929">
    <property type="interactions" value="13"/>
</dbReference>
<dbReference type="FunCoup" id="Q9Y7K4">
    <property type="interactions" value="22"/>
</dbReference>
<dbReference type="STRING" id="284812.Q9Y7K4"/>
<dbReference type="iPTMnet" id="Q9Y7K4"/>
<dbReference type="PaxDb" id="4896-SPBC2A9.02.1"/>
<dbReference type="EnsemblFungi" id="SPBC2A9.02.1">
    <property type="protein sequence ID" value="SPBC2A9.02.1:pep"/>
    <property type="gene ID" value="SPBC2A9.02"/>
</dbReference>
<dbReference type="KEGG" id="spo:2540401"/>
<dbReference type="PomBase" id="SPBC2A9.02"/>
<dbReference type="VEuPathDB" id="FungiDB:SPBC2A9.02"/>
<dbReference type="eggNOG" id="KOG1502">
    <property type="taxonomic scope" value="Eukaryota"/>
</dbReference>
<dbReference type="HOGENOM" id="CLU_007383_12_3_1"/>
<dbReference type="InParanoid" id="Q9Y7K4"/>
<dbReference type="OMA" id="HTAFDHD"/>
<dbReference type="PhylomeDB" id="Q9Y7K4"/>
<dbReference type="PRO" id="PR:Q9Y7K4"/>
<dbReference type="Proteomes" id="UP000002485">
    <property type="component" value="Chromosome II"/>
</dbReference>
<dbReference type="GO" id="GO:0005737">
    <property type="term" value="C:cytoplasm"/>
    <property type="evidence" value="ECO:0000318"/>
    <property type="project" value="GO_Central"/>
</dbReference>
<dbReference type="GO" id="GO:0004029">
    <property type="term" value="F:aldehyde dehydrogenase (NAD+) activity"/>
    <property type="evidence" value="ECO:0000318"/>
    <property type="project" value="GO_Central"/>
</dbReference>
<dbReference type="GO" id="GO:1990748">
    <property type="term" value="P:cellular detoxification"/>
    <property type="evidence" value="ECO:0000303"/>
    <property type="project" value="PomBase"/>
</dbReference>
<dbReference type="CDD" id="cd05262">
    <property type="entry name" value="SDR_a7"/>
    <property type="match status" value="1"/>
</dbReference>
<dbReference type="Gene3D" id="3.40.50.720">
    <property type="entry name" value="NAD(P)-binding Rossmann-like Domain"/>
    <property type="match status" value="1"/>
</dbReference>
<dbReference type="InterPro" id="IPR001509">
    <property type="entry name" value="Epimerase_deHydtase"/>
</dbReference>
<dbReference type="InterPro" id="IPR036291">
    <property type="entry name" value="NAD(P)-bd_dom_sf"/>
</dbReference>
<dbReference type="InterPro" id="IPR051783">
    <property type="entry name" value="NAD(P)-dependent_oxidoreduct"/>
</dbReference>
<dbReference type="PANTHER" id="PTHR48079">
    <property type="entry name" value="PROTEIN YEEZ"/>
    <property type="match status" value="1"/>
</dbReference>
<dbReference type="PANTHER" id="PTHR48079:SF9">
    <property type="entry name" value="PUTATIVE-RELATED"/>
    <property type="match status" value="1"/>
</dbReference>
<dbReference type="Pfam" id="PF01370">
    <property type="entry name" value="Epimerase"/>
    <property type="match status" value="1"/>
</dbReference>
<dbReference type="SUPFAM" id="SSF51735">
    <property type="entry name" value="NAD(P)-binding Rossmann-fold domains"/>
    <property type="match status" value="1"/>
</dbReference>
<protein>
    <recommendedName>
        <fullName>Uncharacterized protein C2A9.02</fullName>
    </recommendedName>
</protein>
<keyword id="KW-1185">Reference proteome</keyword>
<accession>Q9Y7K4</accession>
<feature type="chain" id="PRO_0000318142" description="Uncharacterized protein C2A9.02">
    <location>
        <begin position="1"/>
        <end position="295"/>
    </location>
</feature>